<keyword id="KW-0560">Oxidoreductase</keyword>
<keyword id="KW-0819">tRNA processing</keyword>
<feature type="chain" id="PRO_1000013780" description="tRNA uridine(34) hydroxylase">
    <location>
        <begin position="1"/>
        <end position="315"/>
    </location>
</feature>
<feature type="domain" description="Rhodanese" evidence="1">
    <location>
        <begin position="136"/>
        <end position="230"/>
    </location>
</feature>
<feature type="active site" description="Cysteine persulfide intermediate" evidence="1">
    <location>
        <position position="190"/>
    </location>
</feature>
<organism>
    <name type="scientific">Sinorhizobium medicae (strain WSM419)</name>
    <name type="common">Ensifer medicae</name>
    <dbReference type="NCBI Taxonomy" id="366394"/>
    <lineage>
        <taxon>Bacteria</taxon>
        <taxon>Pseudomonadati</taxon>
        <taxon>Pseudomonadota</taxon>
        <taxon>Alphaproteobacteria</taxon>
        <taxon>Hyphomicrobiales</taxon>
        <taxon>Rhizobiaceae</taxon>
        <taxon>Sinorhizobium/Ensifer group</taxon>
        <taxon>Sinorhizobium</taxon>
    </lineage>
</organism>
<proteinExistence type="inferred from homology"/>
<sequence length="315" mass="35621">MTDMLTTSRRPETPGQFLVAALYHFISFPRFADFREPLQAICDANGVKGTLLLAHEGINGTIAGSEEGIATVLAFLRAQPEFADLVHKESRASAMPFLRMKVRLKKEIVTMGVENIDPKKVVGTYVEPKDWNALISDPETLVIDTRNDYETAIGVFQGAVDPKTKTFREFPEWVRNNSGLHNKPKIAMYCTGGIRCEKATAFMKEQGFEEVYHLKGGILKYLEEIPPEESLWEGACFVFDERVSVTHGLQEGEHTLCHACRQPLTTEDLRSPLHEEGVSCVNCHDTRTEEDRERYRQRQRQIVLAKKRGARHLGS</sequence>
<accession>A6UD82</accession>
<reference key="1">
    <citation type="submission" date="2007-06" db="EMBL/GenBank/DDBJ databases">
        <title>Complete sequence of Sinorhizobium medicae WSM419 chromosome.</title>
        <authorList>
            <consortium name="US DOE Joint Genome Institute"/>
            <person name="Copeland A."/>
            <person name="Lucas S."/>
            <person name="Lapidus A."/>
            <person name="Barry K."/>
            <person name="Glavina del Rio T."/>
            <person name="Dalin E."/>
            <person name="Tice H."/>
            <person name="Pitluck S."/>
            <person name="Chain P."/>
            <person name="Malfatti S."/>
            <person name="Shin M."/>
            <person name="Vergez L."/>
            <person name="Schmutz J."/>
            <person name="Larimer F."/>
            <person name="Land M."/>
            <person name="Hauser L."/>
            <person name="Kyrpides N."/>
            <person name="Mikhailova N."/>
            <person name="Reeve W.G."/>
            <person name="Richardson P."/>
        </authorList>
    </citation>
    <scope>NUCLEOTIDE SEQUENCE [LARGE SCALE GENOMIC DNA]</scope>
    <source>
        <strain>WSM419</strain>
    </source>
</reference>
<protein>
    <recommendedName>
        <fullName evidence="1">tRNA uridine(34) hydroxylase</fullName>
        <ecNumber evidence="1">1.14.-.-</ecNumber>
    </recommendedName>
    <alternativeName>
        <fullName evidence="1">tRNA hydroxylation protein O</fullName>
    </alternativeName>
</protein>
<name>TRHO_SINMW</name>
<evidence type="ECO:0000255" key="1">
    <source>
        <dbReference type="HAMAP-Rule" id="MF_00469"/>
    </source>
</evidence>
<gene>
    <name evidence="1" type="primary">trhO</name>
    <name type="ordered locus">Smed_2782</name>
</gene>
<comment type="function">
    <text evidence="1">Catalyzes oxygen-dependent 5-hydroxyuridine (ho5U) modification at position 34 in tRNAs.</text>
</comment>
<comment type="catalytic activity">
    <reaction evidence="1">
        <text>uridine(34) in tRNA + AH2 + O2 = 5-hydroxyuridine(34) in tRNA + A + H2O</text>
        <dbReference type="Rhea" id="RHEA:64224"/>
        <dbReference type="Rhea" id="RHEA-COMP:11727"/>
        <dbReference type="Rhea" id="RHEA-COMP:13381"/>
        <dbReference type="ChEBI" id="CHEBI:13193"/>
        <dbReference type="ChEBI" id="CHEBI:15377"/>
        <dbReference type="ChEBI" id="CHEBI:15379"/>
        <dbReference type="ChEBI" id="CHEBI:17499"/>
        <dbReference type="ChEBI" id="CHEBI:65315"/>
        <dbReference type="ChEBI" id="CHEBI:136877"/>
    </reaction>
</comment>
<comment type="similarity">
    <text evidence="1">Belongs to the TrhO family.</text>
</comment>
<dbReference type="EC" id="1.14.-.-" evidence="1"/>
<dbReference type="EMBL" id="CP000738">
    <property type="protein sequence ID" value="ABR61612.1"/>
    <property type="molecule type" value="Genomic_DNA"/>
</dbReference>
<dbReference type="RefSeq" id="WP_012066997.1">
    <property type="nucleotide sequence ID" value="NC_009636.1"/>
</dbReference>
<dbReference type="RefSeq" id="YP_001328447.1">
    <property type="nucleotide sequence ID" value="NC_009636.1"/>
</dbReference>
<dbReference type="SMR" id="A6UD82"/>
<dbReference type="STRING" id="366394.Smed_2782"/>
<dbReference type="KEGG" id="smd:Smed_2782"/>
<dbReference type="PATRIC" id="fig|366394.8.peg.5989"/>
<dbReference type="eggNOG" id="COG1054">
    <property type="taxonomic scope" value="Bacteria"/>
</dbReference>
<dbReference type="HOGENOM" id="CLU_038878_0_0_5"/>
<dbReference type="OrthoDB" id="9778326at2"/>
<dbReference type="Proteomes" id="UP000001108">
    <property type="component" value="Chromosome"/>
</dbReference>
<dbReference type="GO" id="GO:0016705">
    <property type="term" value="F:oxidoreductase activity, acting on paired donors, with incorporation or reduction of molecular oxygen"/>
    <property type="evidence" value="ECO:0007669"/>
    <property type="project" value="UniProtKB-UniRule"/>
</dbReference>
<dbReference type="GO" id="GO:0006400">
    <property type="term" value="P:tRNA modification"/>
    <property type="evidence" value="ECO:0007669"/>
    <property type="project" value="UniProtKB-UniRule"/>
</dbReference>
<dbReference type="CDD" id="cd01518">
    <property type="entry name" value="RHOD_YceA"/>
    <property type="match status" value="1"/>
</dbReference>
<dbReference type="Gene3D" id="3.30.70.100">
    <property type="match status" value="1"/>
</dbReference>
<dbReference type="Gene3D" id="3.40.250.10">
    <property type="entry name" value="Rhodanese-like domain"/>
    <property type="match status" value="1"/>
</dbReference>
<dbReference type="HAMAP" id="MF_00469">
    <property type="entry name" value="TrhO"/>
    <property type="match status" value="1"/>
</dbReference>
<dbReference type="InterPro" id="IPR036280">
    <property type="entry name" value="Multihaem_cyt_sf"/>
</dbReference>
<dbReference type="InterPro" id="IPR001763">
    <property type="entry name" value="Rhodanese-like_dom"/>
</dbReference>
<dbReference type="InterPro" id="IPR036873">
    <property type="entry name" value="Rhodanese-like_dom_sf"/>
</dbReference>
<dbReference type="InterPro" id="IPR020936">
    <property type="entry name" value="TrhO"/>
</dbReference>
<dbReference type="InterPro" id="IPR040503">
    <property type="entry name" value="TRHO_N"/>
</dbReference>
<dbReference type="NCBIfam" id="NF001136">
    <property type="entry name" value="PRK00142.1-4"/>
    <property type="match status" value="1"/>
</dbReference>
<dbReference type="PANTHER" id="PTHR43268:SF3">
    <property type="entry name" value="RHODANESE-LIKE DOMAIN-CONTAINING PROTEIN 7-RELATED"/>
    <property type="match status" value="1"/>
</dbReference>
<dbReference type="PANTHER" id="PTHR43268">
    <property type="entry name" value="THIOSULFATE SULFURTRANSFERASE/RHODANESE-LIKE DOMAIN-CONTAINING PROTEIN 2"/>
    <property type="match status" value="1"/>
</dbReference>
<dbReference type="Pfam" id="PF00581">
    <property type="entry name" value="Rhodanese"/>
    <property type="match status" value="1"/>
</dbReference>
<dbReference type="Pfam" id="PF17773">
    <property type="entry name" value="UPF0176_N"/>
    <property type="match status" value="1"/>
</dbReference>
<dbReference type="SMART" id="SM00450">
    <property type="entry name" value="RHOD"/>
    <property type="match status" value="1"/>
</dbReference>
<dbReference type="SUPFAM" id="SSF48695">
    <property type="entry name" value="Multiheme cytochromes"/>
    <property type="match status" value="1"/>
</dbReference>
<dbReference type="SUPFAM" id="SSF52821">
    <property type="entry name" value="Rhodanese/Cell cycle control phosphatase"/>
    <property type="match status" value="1"/>
</dbReference>
<dbReference type="PROSITE" id="PS50206">
    <property type="entry name" value="RHODANESE_3"/>
    <property type="match status" value="1"/>
</dbReference>